<protein>
    <recommendedName>
        <fullName evidence="1">Acetyl-coenzyme A synthetase</fullName>
        <shortName evidence="1">AcCoA synthetase</shortName>
        <shortName evidence="1">Acs</shortName>
        <ecNumber evidence="1">6.2.1.1</ecNumber>
    </recommendedName>
    <alternativeName>
        <fullName evidence="1">Acetate--CoA ligase</fullName>
    </alternativeName>
    <alternativeName>
        <fullName evidence="1">Acyl-activating enzyme</fullName>
    </alternativeName>
</protein>
<gene>
    <name evidence="1" type="primary">acsA</name>
    <name type="ordered locus">Sbal_1752</name>
</gene>
<reference key="1">
    <citation type="submission" date="2007-02" db="EMBL/GenBank/DDBJ databases">
        <title>Complete sequence of chromosome of Shewanella baltica OS155.</title>
        <authorList>
            <consortium name="US DOE Joint Genome Institute"/>
            <person name="Copeland A."/>
            <person name="Lucas S."/>
            <person name="Lapidus A."/>
            <person name="Barry K."/>
            <person name="Detter J.C."/>
            <person name="Glavina del Rio T."/>
            <person name="Hammon N."/>
            <person name="Israni S."/>
            <person name="Dalin E."/>
            <person name="Tice H."/>
            <person name="Pitluck S."/>
            <person name="Sims D.R."/>
            <person name="Brettin T."/>
            <person name="Bruce D."/>
            <person name="Han C."/>
            <person name="Tapia R."/>
            <person name="Brainard J."/>
            <person name="Schmutz J."/>
            <person name="Larimer F."/>
            <person name="Land M."/>
            <person name="Hauser L."/>
            <person name="Kyrpides N."/>
            <person name="Mikhailova N."/>
            <person name="Brettar I."/>
            <person name="Klappenbach J."/>
            <person name="Konstantinidis K."/>
            <person name="Rodrigues J."/>
            <person name="Tiedje J."/>
            <person name="Richardson P."/>
        </authorList>
    </citation>
    <scope>NUCLEOTIDE SEQUENCE [LARGE SCALE GENOMIC DNA]</scope>
    <source>
        <strain>OS155 / ATCC BAA-1091</strain>
    </source>
</reference>
<name>ACSA_SHEB5</name>
<evidence type="ECO:0000255" key="1">
    <source>
        <dbReference type="HAMAP-Rule" id="MF_01123"/>
    </source>
</evidence>
<accession>A3D3E8</accession>
<keyword id="KW-0007">Acetylation</keyword>
<keyword id="KW-0067">ATP-binding</keyword>
<keyword id="KW-0436">Ligase</keyword>
<keyword id="KW-0460">Magnesium</keyword>
<keyword id="KW-0479">Metal-binding</keyword>
<keyword id="KW-0547">Nucleotide-binding</keyword>
<keyword id="KW-1185">Reference proteome</keyword>
<dbReference type="EC" id="6.2.1.1" evidence="1"/>
<dbReference type="EMBL" id="CP000563">
    <property type="protein sequence ID" value="ABN61261.1"/>
    <property type="molecule type" value="Genomic_DNA"/>
</dbReference>
<dbReference type="SMR" id="A3D3E8"/>
<dbReference type="STRING" id="325240.Sbal_1752"/>
<dbReference type="KEGG" id="sbl:Sbal_1752"/>
<dbReference type="HOGENOM" id="CLU_000022_3_6_6"/>
<dbReference type="OrthoDB" id="9803968at2"/>
<dbReference type="Proteomes" id="UP000001557">
    <property type="component" value="Chromosome"/>
</dbReference>
<dbReference type="GO" id="GO:0005829">
    <property type="term" value="C:cytosol"/>
    <property type="evidence" value="ECO:0007669"/>
    <property type="project" value="TreeGrafter"/>
</dbReference>
<dbReference type="GO" id="GO:0003987">
    <property type="term" value="F:acetate-CoA ligase activity"/>
    <property type="evidence" value="ECO:0007669"/>
    <property type="project" value="UniProtKB-UniRule"/>
</dbReference>
<dbReference type="GO" id="GO:0016208">
    <property type="term" value="F:AMP binding"/>
    <property type="evidence" value="ECO:0007669"/>
    <property type="project" value="InterPro"/>
</dbReference>
<dbReference type="GO" id="GO:0005524">
    <property type="term" value="F:ATP binding"/>
    <property type="evidence" value="ECO:0007669"/>
    <property type="project" value="UniProtKB-KW"/>
</dbReference>
<dbReference type="GO" id="GO:0046872">
    <property type="term" value="F:metal ion binding"/>
    <property type="evidence" value="ECO:0007669"/>
    <property type="project" value="UniProtKB-KW"/>
</dbReference>
<dbReference type="GO" id="GO:0019427">
    <property type="term" value="P:acetyl-CoA biosynthetic process from acetate"/>
    <property type="evidence" value="ECO:0007669"/>
    <property type="project" value="InterPro"/>
</dbReference>
<dbReference type="CDD" id="cd05966">
    <property type="entry name" value="ACS"/>
    <property type="match status" value="1"/>
</dbReference>
<dbReference type="FunFam" id="3.30.300.30:FF:000004">
    <property type="entry name" value="Acetyl-coenzyme A synthetase"/>
    <property type="match status" value="1"/>
</dbReference>
<dbReference type="FunFam" id="3.40.50.12780:FF:000001">
    <property type="entry name" value="Acetyl-coenzyme A synthetase"/>
    <property type="match status" value="1"/>
</dbReference>
<dbReference type="Gene3D" id="3.30.300.30">
    <property type="match status" value="1"/>
</dbReference>
<dbReference type="Gene3D" id="3.40.50.12780">
    <property type="entry name" value="N-terminal domain of ligase-like"/>
    <property type="match status" value="1"/>
</dbReference>
<dbReference type="HAMAP" id="MF_01123">
    <property type="entry name" value="Ac_CoA_synth"/>
    <property type="match status" value="1"/>
</dbReference>
<dbReference type="InterPro" id="IPR011904">
    <property type="entry name" value="Ac_CoA_lig"/>
</dbReference>
<dbReference type="InterPro" id="IPR032387">
    <property type="entry name" value="ACAS_N"/>
</dbReference>
<dbReference type="InterPro" id="IPR025110">
    <property type="entry name" value="AMP-bd_C"/>
</dbReference>
<dbReference type="InterPro" id="IPR045851">
    <property type="entry name" value="AMP-bd_C_sf"/>
</dbReference>
<dbReference type="InterPro" id="IPR020845">
    <property type="entry name" value="AMP-binding_CS"/>
</dbReference>
<dbReference type="InterPro" id="IPR000873">
    <property type="entry name" value="AMP-dep_synth/lig_dom"/>
</dbReference>
<dbReference type="InterPro" id="IPR042099">
    <property type="entry name" value="ANL_N_sf"/>
</dbReference>
<dbReference type="NCBIfam" id="TIGR02188">
    <property type="entry name" value="Ac_CoA_lig_AcsA"/>
    <property type="match status" value="1"/>
</dbReference>
<dbReference type="NCBIfam" id="NF001208">
    <property type="entry name" value="PRK00174.1"/>
    <property type="match status" value="1"/>
</dbReference>
<dbReference type="PANTHER" id="PTHR24095">
    <property type="entry name" value="ACETYL-COENZYME A SYNTHETASE"/>
    <property type="match status" value="1"/>
</dbReference>
<dbReference type="PANTHER" id="PTHR24095:SF243">
    <property type="entry name" value="ACETYL-COENZYME A SYNTHETASE"/>
    <property type="match status" value="1"/>
</dbReference>
<dbReference type="Pfam" id="PF16177">
    <property type="entry name" value="ACAS_N"/>
    <property type="match status" value="1"/>
</dbReference>
<dbReference type="Pfam" id="PF00501">
    <property type="entry name" value="AMP-binding"/>
    <property type="match status" value="1"/>
</dbReference>
<dbReference type="Pfam" id="PF13193">
    <property type="entry name" value="AMP-binding_C"/>
    <property type="match status" value="1"/>
</dbReference>
<dbReference type="SUPFAM" id="SSF56801">
    <property type="entry name" value="Acetyl-CoA synthetase-like"/>
    <property type="match status" value="1"/>
</dbReference>
<dbReference type="PROSITE" id="PS00455">
    <property type="entry name" value="AMP_BINDING"/>
    <property type="match status" value="1"/>
</dbReference>
<comment type="function">
    <text evidence="1">Catalyzes the conversion of acetate into acetyl-CoA (AcCoA), an essential intermediate at the junction of anabolic and catabolic pathways. AcsA undergoes a two-step reaction. In the first half reaction, AcsA combines acetate with ATP to form acetyl-adenylate (AcAMP) intermediate. In the second half reaction, it can then transfer the acetyl group from AcAMP to the sulfhydryl group of CoA, forming the product AcCoA.</text>
</comment>
<comment type="catalytic activity">
    <reaction evidence="1">
        <text>acetate + ATP + CoA = acetyl-CoA + AMP + diphosphate</text>
        <dbReference type="Rhea" id="RHEA:23176"/>
        <dbReference type="ChEBI" id="CHEBI:30089"/>
        <dbReference type="ChEBI" id="CHEBI:30616"/>
        <dbReference type="ChEBI" id="CHEBI:33019"/>
        <dbReference type="ChEBI" id="CHEBI:57287"/>
        <dbReference type="ChEBI" id="CHEBI:57288"/>
        <dbReference type="ChEBI" id="CHEBI:456215"/>
        <dbReference type="EC" id="6.2.1.1"/>
    </reaction>
</comment>
<comment type="cofactor">
    <cofactor evidence="1">
        <name>Mg(2+)</name>
        <dbReference type="ChEBI" id="CHEBI:18420"/>
    </cofactor>
</comment>
<comment type="PTM">
    <text evidence="1">Acetylated. Deacetylation by the SIR2-homolog deacetylase activates the enzyme.</text>
</comment>
<comment type="similarity">
    <text evidence="1">Belongs to the ATP-dependent AMP-binding enzyme family.</text>
</comment>
<feature type="chain" id="PRO_1000065316" description="Acetyl-coenzyme A synthetase">
    <location>
        <begin position="1"/>
        <end position="650"/>
    </location>
</feature>
<feature type="binding site" evidence="1">
    <location>
        <begin position="191"/>
        <end position="194"/>
    </location>
    <ligand>
        <name>CoA</name>
        <dbReference type="ChEBI" id="CHEBI:57287"/>
    </ligand>
</feature>
<feature type="binding site" evidence="1">
    <location>
        <position position="311"/>
    </location>
    <ligand>
        <name>CoA</name>
        <dbReference type="ChEBI" id="CHEBI:57287"/>
    </ligand>
</feature>
<feature type="binding site" evidence="1">
    <location>
        <position position="335"/>
    </location>
    <ligand>
        <name>CoA</name>
        <dbReference type="ChEBI" id="CHEBI:57287"/>
    </ligand>
</feature>
<feature type="binding site" evidence="1">
    <location>
        <begin position="387"/>
        <end position="389"/>
    </location>
    <ligand>
        <name>ATP</name>
        <dbReference type="ChEBI" id="CHEBI:30616"/>
    </ligand>
</feature>
<feature type="binding site" evidence="1">
    <location>
        <begin position="411"/>
        <end position="416"/>
    </location>
    <ligand>
        <name>ATP</name>
        <dbReference type="ChEBI" id="CHEBI:30616"/>
    </ligand>
</feature>
<feature type="binding site" evidence="1">
    <location>
        <position position="500"/>
    </location>
    <ligand>
        <name>ATP</name>
        <dbReference type="ChEBI" id="CHEBI:30616"/>
    </ligand>
</feature>
<feature type="binding site" evidence="1">
    <location>
        <position position="515"/>
    </location>
    <ligand>
        <name>ATP</name>
        <dbReference type="ChEBI" id="CHEBI:30616"/>
    </ligand>
</feature>
<feature type="binding site" evidence="1">
    <location>
        <position position="523"/>
    </location>
    <ligand>
        <name>CoA</name>
        <dbReference type="ChEBI" id="CHEBI:57287"/>
    </ligand>
</feature>
<feature type="binding site" evidence="1">
    <location>
        <position position="526"/>
    </location>
    <ligand>
        <name>ATP</name>
        <dbReference type="ChEBI" id="CHEBI:30616"/>
    </ligand>
</feature>
<feature type="binding site" evidence="1">
    <location>
        <position position="537"/>
    </location>
    <ligand>
        <name>Mg(2+)</name>
        <dbReference type="ChEBI" id="CHEBI:18420"/>
    </ligand>
</feature>
<feature type="binding site" evidence="1">
    <location>
        <position position="539"/>
    </location>
    <ligand>
        <name>Mg(2+)</name>
        <dbReference type="ChEBI" id="CHEBI:18420"/>
    </ligand>
</feature>
<feature type="binding site" evidence="1">
    <location>
        <position position="542"/>
    </location>
    <ligand>
        <name>Mg(2+)</name>
        <dbReference type="ChEBI" id="CHEBI:18420"/>
    </ligand>
</feature>
<feature type="binding site" evidence="1">
    <location>
        <position position="584"/>
    </location>
    <ligand>
        <name>CoA</name>
        <dbReference type="ChEBI" id="CHEBI:57287"/>
    </ligand>
</feature>
<feature type="modified residue" description="N6-acetyllysine" evidence="1">
    <location>
        <position position="609"/>
    </location>
</feature>
<sequence length="650" mass="72396">MSSQSLYKVSGNIAANALVNNDKYKTMYQESIVNPEGFWREHGKRIDWIKPYTKIKKTSFDDHNLSINWFYDGTLNASANCLDRHLAEHSDRVAIIWEGDNASEQRKITYGELHADVCKFANALRSQGVRRGDIVTIYMPMVPEAAVAMLACARIGAVHSVVFGGFSPDSIASRVIDGKSKVIITSDEGMRGGRAIPLKRNIDDALKNPDVTTVEKVIVLKRTGGKVDWVEGRDVWWHSLMETASEYCQPEEMDAEAPLFLLYTSGSTGNPKGVLHTTGGYMVYASMTHEYVFDYKAGEVYWCTADVGWITGHSYMVYGPLANGATVLIHEGVPNHPSPARLGEMIDRHKVSILYTAPTLIRALMAEGKQHFDKFDGSSLRIMGSVGEPINPEAWRWYHEVIGHEHCPIVDTWWQTETGGILITPLPGATDTKPGSATRPFFGVQPALVDNMGNILEGENEGNLVLLDSWPGQMRTVYGDHERFVLTYFKTFRGMYFTGDGARRDEDGYYWITGRVDDVINVSGHRLGTAEVESALVSHELVAEAAVVGYPHDIKGQGIYAYVTLTRGTEETEELRQELRQWVRKEIGALATPDLIQWATGLPKTRSGKIMRRFLRKIAANEVTNLGDASTLADPAVIETLIESRLNRTE</sequence>
<proteinExistence type="inferred from homology"/>
<organism>
    <name type="scientific">Shewanella baltica (strain OS155 / ATCC BAA-1091)</name>
    <dbReference type="NCBI Taxonomy" id="325240"/>
    <lineage>
        <taxon>Bacteria</taxon>
        <taxon>Pseudomonadati</taxon>
        <taxon>Pseudomonadota</taxon>
        <taxon>Gammaproteobacteria</taxon>
        <taxon>Alteromonadales</taxon>
        <taxon>Shewanellaceae</taxon>
        <taxon>Shewanella</taxon>
    </lineage>
</organism>